<feature type="chain" id="PRO_0000080355" description="G2/mitotic-specific cyclin-B1">
    <location>
        <begin position="1"/>
        <end position="403"/>
    </location>
</feature>
<sequence length="403" mass="45652">MALRLTRNSQLAAENRTSLAGKGMAAKPALRPRAVLGEIGNKTAAPRPLLKKETKPEITKVVQRKPIKVEKAPEVQLPKRNAAKKLEEKVTLPVVPEPASPTPMETSGCASDDLCQAFSDVLLNIKDVDADDYDNPMLCSEYIKDIYKYLRQLEVDQAVRPKYLEGQEVTGNMRAILIDWLVQVQVKFRLLQETMYMTVGIIDRFLQDNPVPKKQLQLVGVTAMFLASKYEEMYPPEIADFAFVTDRAYTTAQIRDMEMKILRVLNFSFGRPLPLQFLRRASKIGEVTAEHHTLAKYFMELTMVDYEMVHFPPSLVASAAFALSLKVFDCGEWTPTLQYYMDYTEACLIPVMQHIAKNVVKVNEGHTKHMAVKNKYGSQKQMRISHLPQLKSSVIKDLAKQLS</sequence>
<name>CCNB1_ANGJA</name>
<proteinExistence type="evidence at transcript level"/>
<gene>
    <name type="primary">ccnb1</name>
</gene>
<protein>
    <recommendedName>
        <fullName>G2/mitotic-specific cyclin-B1</fullName>
    </recommendedName>
</protein>
<organism>
    <name type="scientific">Anguilla japonica</name>
    <name type="common">Japanese eel</name>
    <dbReference type="NCBI Taxonomy" id="7937"/>
    <lineage>
        <taxon>Eukaryota</taxon>
        <taxon>Metazoa</taxon>
        <taxon>Chordata</taxon>
        <taxon>Craniata</taxon>
        <taxon>Vertebrata</taxon>
        <taxon>Euteleostomi</taxon>
        <taxon>Actinopterygii</taxon>
        <taxon>Neopterygii</taxon>
        <taxon>Teleostei</taxon>
        <taxon>Anguilliformes</taxon>
        <taxon>Anguillidae</taxon>
        <taxon>Anguilla</taxon>
    </lineage>
</organism>
<keyword id="KW-0131">Cell cycle</keyword>
<keyword id="KW-0132">Cell division</keyword>
<keyword id="KW-0195">Cyclin</keyword>
<keyword id="KW-0498">Mitosis</keyword>
<accession>Q60FY0</accession>
<evidence type="ECO:0000250" key="1"/>
<evidence type="ECO:0000305" key="2"/>
<comment type="function">
    <text evidence="1">Essential for the control of the cell cycle at the G2/M (mitosis) transition.</text>
</comment>
<comment type="subunit">
    <text evidence="1">Interacts with the CDC2 protein kinase to form a serine/threonine kinase holoenzyme complex also known as maturation promoting factor (MPF). The cyclin subunit imparts substrate specificity to the complex (By similarity).</text>
</comment>
<comment type="similarity">
    <text evidence="2">Belongs to the cyclin family. Cyclin AB subfamily.</text>
</comment>
<reference key="1">
    <citation type="journal article" date="2004" name="Biochem. Biophys. Res. Commun.">
        <title>The cloning of cyclin B3 and its gene expression during hormonally induced spermatogenesis in the teleost, Anguilla japonica.</title>
        <authorList>
            <person name="Kajiura-Kobayashi H."/>
            <person name="Kobayashi T."/>
            <person name="Nagahama Y."/>
        </authorList>
    </citation>
    <scope>NUCLEOTIDE SEQUENCE [MRNA]</scope>
</reference>
<dbReference type="EMBL" id="AB183431">
    <property type="protein sequence ID" value="BAD52076.1"/>
    <property type="molecule type" value="mRNA"/>
</dbReference>
<dbReference type="SMR" id="Q60FY0"/>
<dbReference type="GO" id="GO:0016538">
    <property type="term" value="F:cyclin-dependent protein serine/threonine kinase regulator activity"/>
    <property type="evidence" value="ECO:0007669"/>
    <property type="project" value="InterPro"/>
</dbReference>
<dbReference type="GO" id="GO:0051301">
    <property type="term" value="P:cell division"/>
    <property type="evidence" value="ECO:0007669"/>
    <property type="project" value="UniProtKB-KW"/>
</dbReference>
<dbReference type="GO" id="GO:0044772">
    <property type="term" value="P:mitotic cell cycle phase transition"/>
    <property type="evidence" value="ECO:0007669"/>
    <property type="project" value="InterPro"/>
</dbReference>
<dbReference type="CDD" id="cd20565">
    <property type="entry name" value="CYCLIN_CCNB1_rpt1"/>
    <property type="match status" value="1"/>
</dbReference>
<dbReference type="FunFam" id="1.10.472.10:FF:000198">
    <property type="entry name" value="G2/mitotic-specific cyclin-B1"/>
    <property type="match status" value="1"/>
</dbReference>
<dbReference type="Gene3D" id="1.10.472.10">
    <property type="entry name" value="Cyclin-like"/>
    <property type="match status" value="2"/>
</dbReference>
<dbReference type="InterPro" id="IPR048026">
    <property type="entry name" value="CCNB1_first_cyclin-box"/>
</dbReference>
<dbReference type="InterPro" id="IPR039361">
    <property type="entry name" value="Cyclin"/>
</dbReference>
<dbReference type="InterPro" id="IPR013763">
    <property type="entry name" value="Cyclin-like_dom"/>
</dbReference>
<dbReference type="InterPro" id="IPR036915">
    <property type="entry name" value="Cyclin-like_sf"/>
</dbReference>
<dbReference type="InterPro" id="IPR046965">
    <property type="entry name" value="Cyclin_A/B-like"/>
</dbReference>
<dbReference type="InterPro" id="IPR004367">
    <property type="entry name" value="Cyclin_C-dom"/>
</dbReference>
<dbReference type="InterPro" id="IPR006671">
    <property type="entry name" value="Cyclin_N"/>
</dbReference>
<dbReference type="InterPro" id="IPR048258">
    <property type="entry name" value="Cyclins_cyclin-box"/>
</dbReference>
<dbReference type="PANTHER" id="PTHR10177">
    <property type="entry name" value="CYCLINS"/>
    <property type="match status" value="1"/>
</dbReference>
<dbReference type="Pfam" id="PF02984">
    <property type="entry name" value="Cyclin_C"/>
    <property type="match status" value="1"/>
</dbReference>
<dbReference type="Pfam" id="PF00134">
    <property type="entry name" value="Cyclin_N"/>
    <property type="match status" value="1"/>
</dbReference>
<dbReference type="PIRSF" id="PIRSF001771">
    <property type="entry name" value="Cyclin_A_B_D_E"/>
    <property type="match status" value="1"/>
</dbReference>
<dbReference type="SMART" id="SM00385">
    <property type="entry name" value="CYCLIN"/>
    <property type="match status" value="2"/>
</dbReference>
<dbReference type="SMART" id="SM01332">
    <property type="entry name" value="Cyclin_C"/>
    <property type="match status" value="1"/>
</dbReference>
<dbReference type="SUPFAM" id="SSF47954">
    <property type="entry name" value="Cyclin-like"/>
    <property type="match status" value="2"/>
</dbReference>
<dbReference type="PROSITE" id="PS00292">
    <property type="entry name" value="CYCLINS"/>
    <property type="match status" value="1"/>
</dbReference>